<accession>Q8VVB5</accession>
<accession>Q5M403</accession>
<dbReference type="EC" id="5.4.2.11" evidence="1"/>
<dbReference type="EMBL" id="AF442555">
    <property type="protein sequence ID" value="AAL35381.1"/>
    <property type="molecule type" value="Genomic_DNA"/>
</dbReference>
<dbReference type="EMBL" id="CP000023">
    <property type="protein sequence ID" value="AAV60840.1"/>
    <property type="molecule type" value="Genomic_DNA"/>
</dbReference>
<dbReference type="RefSeq" id="WP_011226119.1">
    <property type="nucleotide sequence ID" value="NC_006448.1"/>
</dbReference>
<dbReference type="SMR" id="Q8VVB5"/>
<dbReference type="STRING" id="264199.stu1204"/>
<dbReference type="KEGG" id="stl:stu1204"/>
<dbReference type="eggNOG" id="COG0588">
    <property type="taxonomic scope" value="Bacteria"/>
</dbReference>
<dbReference type="HOGENOM" id="CLU_033323_1_5_9"/>
<dbReference type="UniPathway" id="UPA00109">
    <property type="reaction ID" value="UER00186"/>
</dbReference>
<dbReference type="Proteomes" id="UP000001170">
    <property type="component" value="Chromosome"/>
</dbReference>
<dbReference type="GO" id="GO:0004619">
    <property type="term" value="F:phosphoglycerate mutase activity"/>
    <property type="evidence" value="ECO:0007669"/>
    <property type="project" value="UniProtKB-EC"/>
</dbReference>
<dbReference type="GO" id="GO:0006094">
    <property type="term" value="P:gluconeogenesis"/>
    <property type="evidence" value="ECO:0007669"/>
    <property type="project" value="UniProtKB-UniRule"/>
</dbReference>
<dbReference type="GO" id="GO:0006096">
    <property type="term" value="P:glycolytic process"/>
    <property type="evidence" value="ECO:0007669"/>
    <property type="project" value="UniProtKB-UniRule"/>
</dbReference>
<dbReference type="CDD" id="cd07067">
    <property type="entry name" value="HP_PGM_like"/>
    <property type="match status" value="1"/>
</dbReference>
<dbReference type="FunFam" id="3.40.50.1240:FF:000003">
    <property type="entry name" value="2,3-bisphosphoglycerate-dependent phosphoglycerate mutase"/>
    <property type="match status" value="1"/>
</dbReference>
<dbReference type="Gene3D" id="3.40.50.1240">
    <property type="entry name" value="Phosphoglycerate mutase-like"/>
    <property type="match status" value="1"/>
</dbReference>
<dbReference type="HAMAP" id="MF_01039">
    <property type="entry name" value="PGAM_GpmA"/>
    <property type="match status" value="1"/>
</dbReference>
<dbReference type="InterPro" id="IPR013078">
    <property type="entry name" value="His_Pase_superF_clade-1"/>
</dbReference>
<dbReference type="InterPro" id="IPR029033">
    <property type="entry name" value="His_PPase_superfam"/>
</dbReference>
<dbReference type="InterPro" id="IPR005952">
    <property type="entry name" value="Phosphogly_mut1"/>
</dbReference>
<dbReference type="NCBIfam" id="TIGR01258">
    <property type="entry name" value="pgm_1"/>
    <property type="match status" value="1"/>
</dbReference>
<dbReference type="NCBIfam" id="NF010713">
    <property type="entry name" value="PRK14115.1"/>
    <property type="match status" value="1"/>
</dbReference>
<dbReference type="NCBIfam" id="NF010715">
    <property type="entry name" value="PRK14117.1"/>
    <property type="match status" value="1"/>
</dbReference>
<dbReference type="PANTHER" id="PTHR11931">
    <property type="entry name" value="PHOSPHOGLYCERATE MUTASE"/>
    <property type="match status" value="1"/>
</dbReference>
<dbReference type="Pfam" id="PF00300">
    <property type="entry name" value="His_Phos_1"/>
    <property type="match status" value="2"/>
</dbReference>
<dbReference type="PIRSF" id="PIRSF000709">
    <property type="entry name" value="6PFK_2-Ptase"/>
    <property type="match status" value="1"/>
</dbReference>
<dbReference type="SMART" id="SM00855">
    <property type="entry name" value="PGAM"/>
    <property type="match status" value="1"/>
</dbReference>
<dbReference type="SUPFAM" id="SSF53254">
    <property type="entry name" value="Phosphoglycerate mutase-like"/>
    <property type="match status" value="1"/>
</dbReference>
<evidence type="ECO:0000255" key="1">
    <source>
        <dbReference type="HAMAP-Rule" id="MF_01039"/>
    </source>
</evidence>
<organism>
    <name type="scientific">Streptococcus thermophilus (strain ATCC BAA-250 / LMG 18311)</name>
    <dbReference type="NCBI Taxonomy" id="264199"/>
    <lineage>
        <taxon>Bacteria</taxon>
        <taxon>Bacillati</taxon>
        <taxon>Bacillota</taxon>
        <taxon>Bacilli</taxon>
        <taxon>Lactobacillales</taxon>
        <taxon>Streptococcaceae</taxon>
        <taxon>Streptococcus</taxon>
    </lineage>
</organism>
<feature type="chain" id="PRO_0000179931" description="2,3-bisphosphoglycerate-dependent phosphoglycerate mutase">
    <location>
        <begin position="1"/>
        <end position="230"/>
    </location>
</feature>
<feature type="active site" description="Tele-phosphohistidine intermediate" evidence="1">
    <location>
        <position position="9"/>
    </location>
</feature>
<feature type="active site" description="Proton donor/acceptor" evidence="1">
    <location>
        <position position="87"/>
    </location>
</feature>
<feature type="binding site" evidence="1">
    <location>
        <begin position="8"/>
        <end position="15"/>
    </location>
    <ligand>
        <name>substrate</name>
    </ligand>
</feature>
<feature type="binding site" evidence="1">
    <location>
        <begin position="21"/>
        <end position="22"/>
    </location>
    <ligand>
        <name>substrate</name>
    </ligand>
</feature>
<feature type="binding site" evidence="1">
    <location>
        <position position="60"/>
    </location>
    <ligand>
        <name>substrate</name>
    </ligand>
</feature>
<feature type="binding site" evidence="1">
    <location>
        <begin position="87"/>
        <end position="90"/>
    </location>
    <ligand>
        <name>substrate</name>
    </ligand>
</feature>
<feature type="binding site" evidence="1">
    <location>
        <position position="98"/>
    </location>
    <ligand>
        <name>substrate</name>
    </ligand>
</feature>
<feature type="binding site" evidence="1">
    <location>
        <begin position="114"/>
        <end position="115"/>
    </location>
    <ligand>
        <name>substrate</name>
    </ligand>
</feature>
<feature type="binding site" evidence="1">
    <location>
        <begin position="183"/>
        <end position="184"/>
    </location>
    <ligand>
        <name>substrate</name>
    </ligand>
</feature>
<feature type="site" description="Transition state stabilizer" evidence="1">
    <location>
        <position position="182"/>
    </location>
</feature>
<proteinExistence type="inferred from homology"/>
<reference key="1">
    <citation type="submission" date="2001-11" db="EMBL/GenBank/DDBJ databases">
        <title>Modulation of glycolysis by lactose availability in Streptococcus thermophilus.</title>
        <authorList>
            <person name="van den Bogaard P.T.C."/>
            <person name="Kleerebezem M."/>
            <person name="Hols P."/>
            <person name="Crispie F."/>
            <person name="Kuipers O.P."/>
            <person name="de Vos W.M."/>
        </authorList>
    </citation>
    <scope>NUCLEOTIDE SEQUENCE [GENOMIC DNA]</scope>
</reference>
<reference key="2">
    <citation type="journal article" date="2004" name="Nat. Biotechnol.">
        <title>Complete sequence and comparative genome analysis of the dairy bacterium Streptococcus thermophilus.</title>
        <authorList>
            <person name="Bolotin A."/>
            <person name="Quinquis B."/>
            <person name="Renault P."/>
            <person name="Sorokin A."/>
            <person name="Ehrlich S.D."/>
            <person name="Kulakauskas S."/>
            <person name="Lapidus A."/>
            <person name="Goltsman E."/>
            <person name="Mazur M."/>
            <person name="Pusch G.D."/>
            <person name="Fonstein M."/>
            <person name="Overbeek R."/>
            <person name="Kyprides N."/>
            <person name="Purnelle B."/>
            <person name="Prozzi D."/>
            <person name="Ngui K."/>
            <person name="Masuy D."/>
            <person name="Hancy F."/>
            <person name="Burteau S."/>
            <person name="Boutry M."/>
            <person name="Delcour J."/>
            <person name="Goffeau A."/>
            <person name="Hols P."/>
        </authorList>
    </citation>
    <scope>NUCLEOTIDE SEQUENCE [LARGE SCALE GENOMIC DNA]</scope>
    <source>
        <strain>ATCC BAA-250 / LMG 18311</strain>
    </source>
</reference>
<protein>
    <recommendedName>
        <fullName evidence="1">2,3-bisphosphoglycerate-dependent phosphoglycerate mutase</fullName>
        <shortName evidence="1">BPG-dependent PGAM</shortName>
        <shortName evidence="1">PGAM</shortName>
        <shortName evidence="1">Phosphoglyceromutase</shortName>
        <shortName evidence="1">dPGM</shortName>
        <ecNumber evidence="1">5.4.2.11</ecNumber>
    </recommendedName>
</protein>
<name>GPMA_STRT2</name>
<keyword id="KW-0312">Gluconeogenesis</keyword>
<keyword id="KW-0324">Glycolysis</keyword>
<keyword id="KW-0413">Isomerase</keyword>
<keyword id="KW-1185">Reference proteome</keyword>
<comment type="function">
    <text evidence="1">Catalyzes the interconversion of 2-phosphoglycerate and 3-phosphoglycerate.</text>
</comment>
<comment type="catalytic activity">
    <reaction evidence="1">
        <text>(2R)-2-phosphoglycerate = (2R)-3-phosphoglycerate</text>
        <dbReference type="Rhea" id="RHEA:15901"/>
        <dbReference type="ChEBI" id="CHEBI:58272"/>
        <dbReference type="ChEBI" id="CHEBI:58289"/>
        <dbReference type="EC" id="5.4.2.11"/>
    </reaction>
</comment>
<comment type="pathway">
    <text evidence="1">Carbohydrate degradation; glycolysis; pyruvate from D-glyceraldehyde 3-phosphate: step 3/5.</text>
</comment>
<comment type="similarity">
    <text evidence="1">Belongs to the phosphoglycerate mutase family. BPG-dependent PGAM subfamily.</text>
</comment>
<gene>
    <name evidence="1" type="primary">gpmA</name>
    <name type="synonym">pgm</name>
    <name type="ordered locus">stu1204</name>
</gene>
<sequence length="230" mass="26190">MVKLVFARHGESEWNKANLFTGWADVDLSEKGTQQAIDAGKLIKEAGIEFDKAYTSVLKRAIKTTNLALEASDQLWVPVEKSWRLNERHYGGLTGKNKAEAAEQFGDEQVHIWRRSYDVLPPKMDRDDEYSAHKDRRYASLDDSVIPDAENLKVTLERALPFWEDKIAPALKDGKNVFVGAHGNSIRALVKHIKKLSDDEIMDVEIPNFPPLVFEFDEKLNVVSEYYLGK</sequence>